<keyword id="KW-0067">ATP-binding</keyword>
<keyword id="KW-0143">Chaperone</keyword>
<keyword id="KW-0963">Cytoplasm</keyword>
<keyword id="KW-0413">Isomerase</keyword>
<keyword id="KW-0547">Nucleotide-binding</keyword>
<keyword id="KW-1185">Reference proteome</keyword>
<accession>Q3SQJ5</accession>
<dbReference type="EC" id="5.6.1.7" evidence="1"/>
<dbReference type="EMBL" id="CP000115">
    <property type="protein sequence ID" value="ABA05446.1"/>
    <property type="molecule type" value="Genomic_DNA"/>
</dbReference>
<dbReference type="RefSeq" id="WP_011315415.1">
    <property type="nucleotide sequence ID" value="NC_007406.1"/>
</dbReference>
<dbReference type="SMR" id="Q3SQJ5"/>
<dbReference type="STRING" id="323098.Nwi_2192"/>
<dbReference type="KEGG" id="nwi:Nwi_2192"/>
<dbReference type="eggNOG" id="COG0459">
    <property type="taxonomic scope" value="Bacteria"/>
</dbReference>
<dbReference type="HOGENOM" id="CLU_016503_3_0_5"/>
<dbReference type="OrthoDB" id="9766614at2"/>
<dbReference type="Proteomes" id="UP000002531">
    <property type="component" value="Chromosome"/>
</dbReference>
<dbReference type="GO" id="GO:0005737">
    <property type="term" value="C:cytoplasm"/>
    <property type="evidence" value="ECO:0007669"/>
    <property type="project" value="UniProtKB-SubCell"/>
</dbReference>
<dbReference type="GO" id="GO:0005524">
    <property type="term" value="F:ATP binding"/>
    <property type="evidence" value="ECO:0007669"/>
    <property type="project" value="UniProtKB-UniRule"/>
</dbReference>
<dbReference type="GO" id="GO:0140662">
    <property type="term" value="F:ATP-dependent protein folding chaperone"/>
    <property type="evidence" value="ECO:0007669"/>
    <property type="project" value="InterPro"/>
</dbReference>
<dbReference type="GO" id="GO:0016853">
    <property type="term" value="F:isomerase activity"/>
    <property type="evidence" value="ECO:0007669"/>
    <property type="project" value="UniProtKB-KW"/>
</dbReference>
<dbReference type="GO" id="GO:0051082">
    <property type="term" value="F:unfolded protein binding"/>
    <property type="evidence" value="ECO:0007669"/>
    <property type="project" value="UniProtKB-UniRule"/>
</dbReference>
<dbReference type="GO" id="GO:0042026">
    <property type="term" value="P:protein refolding"/>
    <property type="evidence" value="ECO:0007669"/>
    <property type="project" value="UniProtKB-UniRule"/>
</dbReference>
<dbReference type="CDD" id="cd03344">
    <property type="entry name" value="GroEL"/>
    <property type="match status" value="1"/>
</dbReference>
<dbReference type="FunFam" id="1.10.560.10:FF:000001">
    <property type="entry name" value="60 kDa chaperonin"/>
    <property type="match status" value="1"/>
</dbReference>
<dbReference type="FunFam" id="3.50.7.10:FF:000001">
    <property type="entry name" value="60 kDa chaperonin"/>
    <property type="match status" value="1"/>
</dbReference>
<dbReference type="Gene3D" id="3.50.7.10">
    <property type="entry name" value="GroEL"/>
    <property type="match status" value="1"/>
</dbReference>
<dbReference type="Gene3D" id="1.10.560.10">
    <property type="entry name" value="GroEL-like equatorial domain"/>
    <property type="match status" value="1"/>
</dbReference>
<dbReference type="Gene3D" id="3.30.260.10">
    <property type="entry name" value="TCP-1-like chaperonin intermediate domain"/>
    <property type="match status" value="1"/>
</dbReference>
<dbReference type="HAMAP" id="MF_00600">
    <property type="entry name" value="CH60"/>
    <property type="match status" value="1"/>
</dbReference>
<dbReference type="InterPro" id="IPR018370">
    <property type="entry name" value="Chaperonin_Cpn60_CS"/>
</dbReference>
<dbReference type="InterPro" id="IPR001844">
    <property type="entry name" value="Cpn60/GroEL"/>
</dbReference>
<dbReference type="InterPro" id="IPR002423">
    <property type="entry name" value="Cpn60/GroEL/TCP-1"/>
</dbReference>
<dbReference type="InterPro" id="IPR027409">
    <property type="entry name" value="GroEL-like_apical_dom_sf"/>
</dbReference>
<dbReference type="InterPro" id="IPR027413">
    <property type="entry name" value="GROEL-like_equatorial_sf"/>
</dbReference>
<dbReference type="InterPro" id="IPR027410">
    <property type="entry name" value="TCP-1-like_intermed_sf"/>
</dbReference>
<dbReference type="NCBIfam" id="TIGR02348">
    <property type="entry name" value="GroEL"/>
    <property type="match status" value="1"/>
</dbReference>
<dbReference type="NCBIfam" id="NF000592">
    <property type="entry name" value="PRK00013.1"/>
    <property type="match status" value="1"/>
</dbReference>
<dbReference type="NCBIfam" id="NF009487">
    <property type="entry name" value="PRK12849.1"/>
    <property type="match status" value="1"/>
</dbReference>
<dbReference type="NCBIfam" id="NF009488">
    <property type="entry name" value="PRK12850.1"/>
    <property type="match status" value="1"/>
</dbReference>
<dbReference type="NCBIfam" id="NF009489">
    <property type="entry name" value="PRK12851.1"/>
    <property type="match status" value="1"/>
</dbReference>
<dbReference type="NCBIfam" id="NF010704">
    <property type="entry name" value="PRK14104.1"/>
    <property type="match status" value="1"/>
</dbReference>
<dbReference type="PANTHER" id="PTHR45633">
    <property type="entry name" value="60 KDA HEAT SHOCK PROTEIN, MITOCHONDRIAL"/>
    <property type="match status" value="1"/>
</dbReference>
<dbReference type="Pfam" id="PF00118">
    <property type="entry name" value="Cpn60_TCP1"/>
    <property type="match status" value="1"/>
</dbReference>
<dbReference type="PRINTS" id="PR00298">
    <property type="entry name" value="CHAPERONIN60"/>
</dbReference>
<dbReference type="SUPFAM" id="SSF52029">
    <property type="entry name" value="GroEL apical domain-like"/>
    <property type="match status" value="1"/>
</dbReference>
<dbReference type="SUPFAM" id="SSF48592">
    <property type="entry name" value="GroEL equatorial domain-like"/>
    <property type="match status" value="1"/>
</dbReference>
<dbReference type="SUPFAM" id="SSF54849">
    <property type="entry name" value="GroEL-intermediate domain like"/>
    <property type="match status" value="1"/>
</dbReference>
<dbReference type="PROSITE" id="PS00296">
    <property type="entry name" value="CHAPERONINS_CPN60"/>
    <property type="match status" value="1"/>
</dbReference>
<sequence length="545" mass="57872">MSAKDVKFGVDARDKMLRGVDILANAVKVTLGPKGRNVVLEKSFGAPRITKDGVTVAKEIELDDKFENMGAQMVREVASKSADAAGDGTTTATVLAQAIVKEGAKSVAAGMNPMDLKRGIDLAVEAVVADLSRNSKKVTSNEEIAQVGTISANGDSEIGKFLADAMKKVGNEGVITVEEAKSLETELDVVEGMQFDRGYISPYFVTNAEKMRVEMDDAYILINEKKLSSLNELLPLLEAVVQTGKPLVIVAEDVEGEALATLVVNRLRGGLKVAAVKAPGFGDRRKAMLQDIAILTGGQAISEDLGIKLENVTLQMLGRAKKVMIDKENTTIVNGAGKKADIEARVAQIKAQIEETTSDYDREKLQERLAKLAGGVAVIRVGGATEVEVKERKDRVDDAMHATRAAVEEGIVPGGGVALLRASEQLKRIKTQNDDQKTGVEIVRKALSAPARQIAINAGEDGSVIVGKILEKEQYSYGFDSQTGDYGNLISKGIIDPTKVVRTAIQNAASVASLLITTEAMVAELPKKNSPAPAMPGGGMGGMDF</sequence>
<name>CH602_NITWN</name>
<evidence type="ECO:0000255" key="1">
    <source>
        <dbReference type="HAMAP-Rule" id="MF_00600"/>
    </source>
</evidence>
<feature type="chain" id="PRO_0000256937" description="Chaperonin GroEL 2">
    <location>
        <begin position="1"/>
        <end position="545"/>
    </location>
</feature>
<feature type="binding site" evidence="1">
    <location>
        <begin position="30"/>
        <end position="33"/>
    </location>
    <ligand>
        <name>ATP</name>
        <dbReference type="ChEBI" id="CHEBI:30616"/>
    </ligand>
</feature>
<feature type="binding site" evidence="1">
    <location>
        <position position="51"/>
    </location>
    <ligand>
        <name>ATP</name>
        <dbReference type="ChEBI" id="CHEBI:30616"/>
    </ligand>
</feature>
<feature type="binding site" evidence="1">
    <location>
        <begin position="87"/>
        <end position="91"/>
    </location>
    <ligand>
        <name>ATP</name>
        <dbReference type="ChEBI" id="CHEBI:30616"/>
    </ligand>
</feature>
<feature type="binding site" evidence="1">
    <location>
        <position position="415"/>
    </location>
    <ligand>
        <name>ATP</name>
        <dbReference type="ChEBI" id="CHEBI:30616"/>
    </ligand>
</feature>
<feature type="binding site" evidence="1">
    <location>
        <position position="496"/>
    </location>
    <ligand>
        <name>ATP</name>
        <dbReference type="ChEBI" id="CHEBI:30616"/>
    </ligand>
</feature>
<organism>
    <name type="scientific">Nitrobacter winogradskyi (strain ATCC 25391 / DSM 10237 / CIP 104748 / NCIMB 11846 / Nb-255)</name>
    <dbReference type="NCBI Taxonomy" id="323098"/>
    <lineage>
        <taxon>Bacteria</taxon>
        <taxon>Pseudomonadati</taxon>
        <taxon>Pseudomonadota</taxon>
        <taxon>Alphaproteobacteria</taxon>
        <taxon>Hyphomicrobiales</taxon>
        <taxon>Nitrobacteraceae</taxon>
        <taxon>Nitrobacter</taxon>
    </lineage>
</organism>
<gene>
    <name evidence="1" type="primary">groEL2</name>
    <name evidence="1" type="synonym">groL2</name>
    <name type="ordered locus">Nwi_2192</name>
</gene>
<protein>
    <recommendedName>
        <fullName evidence="1">Chaperonin GroEL 2</fullName>
        <ecNumber evidence="1">5.6.1.7</ecNumber>
    </recommendedName>
    <alternativeName>
        <fullName evidence="1">60 kDa chaperonin 2</fullName>
    </alternativeName>
    <alternativeName>
        <fullName evidence="1">Chaperonin-60 2</fullName>
        <shortName evidence="1">Cpn60 2</shortName>
    </alternativeName>
</protein>
<reference key="1">
    <citation type="journal article" date="2006" name="Appl. Environ. Microbiol.">
        <title>Genome sequence of the chemolithoautotrophic nitrite-oxidizing bacterium Nitrobacter winogradskyi Nb-255.</title>
        <authorList>
            <person name="Starkenburg S.R."/>
            <person name="Chain P.S.G."/>
            <person name="Sayavedra-Soto L.A."/>
            <person name="Hauser L."/>
            <person name="Land M.L."/>
            <person name="Larimer F.W."/>
            <person name="Malfatti S.A."/>
            <person name="Klotz M.G."/>
            <person name="Bottomley P.J."/>
            <person name="Arp D.J."/>
            <person name="Hickey W.J."/>
        </authorList>
    </citation>
    <scope>NUCLEOTIDE SEQUENCE [LARGE SCALE GENOMIC DNA]</scope>
    <source>
        <strain>ATCC 25391 / DSM 10237 / CIP 104748 / NCIMB 11846 / Nb-255</strain>
    </source>
</reference>
<comment type="function">
    <text evidence="1">Together with its co-chaperonin GroES, plays an essential role in assisting protein folding. The GroEL-GroES system forms a nano-cage that allows encapsulation of the non-native substrate proteins and provides a physical environment optimized to promote and accelerate protein folding.</text>
</comment>
<comment type="catalytic activity">
    <reaction evidence="1">
        <text>ATP + H2O + a folded polypeptide = ADP + phosphate + an unfolded polypeptide.</text>
        <dbReference type="EC" id="5.6.1.7"/>
    </reaction>
</comment>
<comment type="subunit">
    <text evidence="1">Forms a cylinder of 14 subunits composed of two heptameric rings stacked back-to-back. Interacts with the co-chaperonin GroES.</text>
</comment>
<comment type="subcellular location">
    <subcellularLocation>
        <location evidence="1">Cytoplasm</location>
    </subcellularLocation>
</comment>
<comment type="similarity">
    <text evidence="1">Belongs to the chaperonin (HSP60) family.</text>
</comment>
<proteinExistence type="inferred from homology"/>